<comment type="function">
    <text>Probably plays a role in facilitating the assembly of multimeric protein complexes inside the ER.</text>
</comment>
<comment type="subcellular location">
    <subcellularLocation>
        <location>Endoplasmic reticulum lumen</location>
    </subcellularLocation>
</comment>
<comment type="induction">
    <text>By tunicamycin.</text>
</comment>
<comment type="similarity">
    <text evidence="1">Belongs to the heat shock protein 70 family.</text>
</comment>
<reference key="1">
    <citation type="journal article" date="1992" name="Plant J.">
        <title>Bean homologs of the mammalian glucose-regulated proteins: induction by tunicamycin and interaction with newly synthesized seed storage proteins in the endoplasmic reticulum.</title>
        <authorList>
            <person name="D'Amico L."/>
            <person name="Valsasina B."/>
            <person name="Daminati M.G."/>
            <person name="Fabbrini M.S."/>
            <person name="Nitti G."/>
            <person name="Bollini R."/>
            <person name="Ceriotti A."/>
            <person name="Vitale A."/>
        </authorList>
    </citation>
    <scope>PROTEIN SEQUENCE</scope>
    <source>
        <strain>cv. Greensleeves</strain>
        <tissue>Cotyledon</tissue>
    </source>
</reference>
<dbReference type="GO" id="GO:0005788">
    <property type="term" value="C:endoplasmic reticulum lumen"/>
    <property type="evidence" value="ECO:0007669"/>
    <property type="project" value="UniProtKB-SubCell"/>
</dbReference>
<dbReference type="GO" id="GO:0005524">
    <property type="term" value="F:ATP binding"/>
    <property type="evidence" value="ECO:0007669"/>
    <property type="project" value="UniProtKB-KW"/>
</dbReference>
<evidence type="ECO:0000305" key="1"/>
<organism>
    <name type="scientific">Phaseolus vulgaris</name>
    <name type="common">Kidney bean</name>
    <name type="synonym">French bean</name>
    <dbReference type="NCBI Taxonomy" id="3885"/>
    <lineage>
        <taxon>Eukaryota</taxon>
        <taxon>Viridiplantae</taxon>
        <taxon>Streptophyta</taxon>
        <taxon>Embryophyta</taxon>
        <taxon>Tracheophyta</taxon>
        <taxon>Spermatophyta</taxon>
        <taxon>Magnoliopsida</taxon>
        <taxon>eudicotyledons</taxon>
        <taxon>Gunneridae</taxon>
        <taxon>Pentapetalae</taxon>
        <taxon>rosids</taxon>
        <taxon>fabids</taxon>
        <taxon>Fabales</taxon>
        <taxon>Fabaceae</taxon>
        <taxon>Papilionoideae</taxon>
        <taxon>50 kb inversion clade</taxon>
        <taxon>NPAAA clade</taxon>
        <taxon>indigoferoid/millettioid clade</taxon>
        <taxon>Phaseoleae</taxon>
        <taxon>Phaseolus</taxon>
    </lineage>
</organism>
<name>BIP_PHAVU</name>
<sequence length="20" mass="2147">KEEAKVLGTVIGIDLGTQYL</sequence>
<protein>
    <recommendedName>
        <fullName>Luminal-binding protein</fullName>
    </recommendedName>
    <alternativeName>
        <fullName>78 kDa glucose-regulated protein homolog</fullName>
        <shortName>GRP-78</shortName>
    </alternativeName>
</protein>
<feature type="chain" id="PRO_0000078665" description="Luminal-binding protein">
    <location>
        <begin position="1"/>
        <end position="20" status="greater than"/>
    </location>
</feature>
<feature type="unsure residue" description="A or T">
    <location>
        <position position="4"/>
    </location>
</feature>
<feature type="unsure residue" description="Q or T">
    <location>
        <position position="18"/>
    </location>
</feature>
<feature type="non-terminal residue">
    <location>
        <position position="20"/>
    </location>
</feature>
<proteinExistence type="evidence at protein level"/>
<accession>P80089</accession>
<keyword id="KW-0067">ATP-binding</keyword>
<keyword id="KW-0903">Direct protein sequencing</keyword>
<keyword id="KW-0256">Endoplasmic reticulum</keyword>
<keyword id="KW-0547">Nucleotide-binding</keyword>